<name>LAC5_TRAVE</name>
<comment type="function">
    <text evidence="2">Lignin degradation and detoxification of lignin-derived products.</text>
</comment>
<comment type="catalytic activity">
    <reaction evidence="2">
        <text>4 hydroquinone + O2 = 4 benzosemiquinone + 2 H2O</text>
        <dbReference type="Rhea" id="RHEA:11276"/>
        <dbReference type="ChEBI" id="CHEBI:15377"/>
        <dbReference type="ChEBI" id="CHEBI:15379"/>
        <dbReference type="ChEBI" id="CHEBI:17594"/>
        <dbReference type="ChEBI" id="CHEBI:17977"/>
        <dbReference type="EC" id="1.10.3.2"/>
    </reaction>
</comment>
<comment type="cofactor">
    <cofactor evidence="2">
        <name>Cu cation</name>
        <dbReference type="ChEBI" id="CHEBI:23378"/>
    </cofactor>
    <text evidence="2">Binds 4 Cu cations per monomer.</text>
</comment>
<comment type="subcellular location">
    <subcellularLocation>
        <location evidence="2">Secreted</location>
    </subcellularLocation>
</comment>
<comment type="similarity">
    <text evidence="4">Belongs to the multicopper oxidase family.</text>
</comment>
<keyword id="KW-0186">Copper</keyword>
<keyword id="KW-1015">Disulfide bond</keyword>
<keyword id="KW-0325">Glycoprotein</keyword>
<keyword id="KW-0439">Lignin degradation</keyword>
<keyword id="KW-0479">Metal-binding</keyword>
<keyword id="KW-0560">Oxidoreductase</keyword>
<keyword id="KW-0677">Repeat</keyword>
<keyword id="KW-0964">Secreted</keyword>
<keyword id="KW-0732">Signal</keyword>
<gene>
    <name type="primary">LCC5</name>
    <name type="synonym">LCCIV</name>
</gene>
<dbReference type="EC" id="1.10.3.2" evidence="2"/>
<dbReference type="EMBL" id="U44431">
    <property type="protein sequence ID" value="AAC49829.1"/>
    <property type="molecule type" value="mRNA"/>
</dbReference>
<dbReference type="SMR" id="Q12717"/>
<dbReference type="CAZy" id="AA1">
    <property type="family name" value="Auxiliary Activities 1"/>
</dbReference>
<dbReference type="GlyCosmos" id="Q12717">
    <property type="glycosylation" value="12 sites, No reported glycans"/>
</dbReference>
<dbReference type="GO" id="GO:0005576">
    <property type="term" value="C:extracellular region"/>
    <property type="evidence" value="ECO:0007669"/>
    <property type="project" value="UniProtKB-SubCell"/>
</dbReference>
<dbReference type="GO" id="GO:0005507">
    <property type="term" value="F:copper ion binding"/>
    <property type="evidence" value="ECO:0007669"/>
    <property type="project" value="InterPro"/>
</dbReference>
<dbReference type="GO" id="GO:0052716">
    <property type="term" value="F:hydroquinone:oxygen oxidoreductase activity"/>
    <property type="evidence" value="ECO:0007669"/>
    <property type="project" value="UniProtKB-EC"/>
</dbReference>
<dbReference type="GO" id="GO:0046274">
    <property type="term" value="P:lignin catabolic process"/>
    <property type="evidence" value="ECO:0007669"/>
    <property type="project" value="UniProtKB-KW"/>
</dbReference>
<dbReference type="CDD" id="cd13856">
    <property type="entry name" value="CuRO_1_Tv-LCC_like"/>
    <property type="match status" value="1"/>
</dbReference>
<dbReference type="CDD" id="cd13903">
    <property type="entry name" value="CuRO_3_Tv-LCC_like"/>
    <property type="match status" value="1"/>
</dbReference>
<dbReference type="FunFam" id="2.60.40.420:FF:000045">
    <property type="entry name" value="Laccase 2"/>
    <property type="match status" value="1"/>
</dbReference>
<dbReference type="FunFam" id="2.60.40.420:FF:000125">
    <property type="entry name" value="Laccase 2"/>
    <property type="match status" value="1"/>
</dbReference>
<dbReference type="FunFam" id="2.60.40.420:FF:000112">
    <property type="entry name" value="Laccase B"/>
    <property type="match status" value="1"/>
</dbReference>
<dbReference type="Gene3D" id="2.60.40.420">
    <property type="entry name" value="Cupredoxins - blue copper proteins"/>
    <property type="match status" value="3"/>
</dbReference>
<dbReference type="InterPro" id="IPR011707">
    <property type="entry name" value="Cu-oxidase-like_N"/>
</dbReference>
<dbReference type="InterPro" id="IPR001117">
    <property type="entry name" value="Cu-oxidase_2nd"/>
</dbReference>
<dbReference type="InterPro" id="IPR011706">
    <property type="entry name" value="Cu-oxidase_C"/>
</dbReference>
<dbReference type="InterPro" id="IPR045087">
    <property type="entry name" value="Cu-oxidase_fam"/>
</dbReference>
<dbReference type="InterPro" id="IPR033138">
    <property type="entry name" value="Cu_oxidase_CS"/>
</dbReference>
<dbReference type="InterPro" id="IPR008972">
    <property type="entry name" value="Cupredoxin"/>
</dbReference>
<dbReference type="PANTHER" id="PTHR11709:SF511">
    <property type="entry name" value="LACCASE"/>
    <property type="match status" value="1"/>
</dbReference>
<dbReference type="PANTHER" id="PTHR11709">
    <property type="entry name" value="MULTI-COPPER OXIDASE"/>
    <property type="match status" value="1"/>
</dbReference>
<dbReference type="Pfam" id="PF00394">
    <property type="entry name" value="Cu-oxidase"/>
    <property type="match status" value="1"/>
</dbReference>
<dbReference type="Pfam" id="PF07731">
    <property type="entry name" value="Cu-oxidase_2"/>
    <property type="match status" value="1"/>
</dbReference>
<dbReference type="Pfam" id="PF07732">
    <property type="entry name" value="Cu-oxidase_3"/>
    <property type="match status" value="1"/>
</dbReference>
<dbReference type="SUPFAM" id="SSF49503">
    <property type="entry name" value="Cupredoxins"/>
    <property type="match status" value="3"/>
</dbReference>
<dbReference type="PROSITE" id="PS00079">
    <property type="entry name" value="MULTICOPPER_OXIDASE1"/>
    <property type="match status" value="1"/>
</dbReference>
<reference key="1">
    <citation type="journal article" date="1997" name="Gene">
        <title>Cloning and sequence analysis of two laccase complementary DNAs from the ligninolytic basidiomycete Trametes versicolor.</title>
        <authorList>
            <person name="Ong E."/>
            <person name="Pollock W.B."/>
            <person name="Smith M."/>
        </authorList>
    </citation>
    <scope>NUCLEOTIDE SEQUENCE [MRNA]</scope>
    <source>
        <strain>ATCC 20869 / PAP 52 / 52J</strain>
    </source>
</reference>
<sequence length="527" mass="56094">MGKFHSFVNVVALSLSLSGRVFGAIGPVTDLTISNADVTPDGITRAAVLAGGVFPGPLITGNKGDEFQINVIDNLTNETMLKSTTIHWHGIFQAGTNWADGAAFVNQCPIATGNSFLYDFTVPDQAGTFWYHSHLSTQYCDGLRGPLVVYDPDDANASLYDVDDDTTVITLADWYHTAAKLGPAFPAGPDSVLINGLGRFSGDGGGATNLTVITVTQGKRYRFRLVSISCDPNFTFSIDGHNMTIIEVGGVNHEALDVDSIQIFAGQRYSFILNANQSIDNYWIRAIPNTGTTDTTGGVNSAILRYDTAEEIEPTTNATTSVIPLTETDLVPLDNPAAPGDPQVGGVDLAMSLDFSFNGSNFFINNETFVPPTVPVLLQILSGAQDAASLLPNGSVYTLPSNSTIEISFPIITTDGALNAPGAPHPFHLHGHTFSVVRSAGSSTFNYANPVRRDTVSTGNSGDNVTIRFTTDNPGPWFLHCHIDFHLDAGFAIVFAEDTADTASANPVPTAWSDLCPTYDALDSSDL</sequence>
<feature type="signal peptide" evidence="3">
    <location>
        <begin position="1"/>
        <end position="23"/>
    </location>
</feature>
<feature type="chain" id="PRO_0000002942" description="Laccase-5">
    <location>
        <begin position="24"/>
        <end position="527"/>
    </location>
</feature>
<feature type="domain" description="Plastocyanin-like 1">
    <location>
        <begin position="25"/>
        <end position="150"/>
    </location>
</feature>
<feature type="domain" description="Plastocyanin-like 2">
    <location>
        <begin position="162"/>
        <end position="306"/>
    </location>
</feature>
<feature type="domain" description="Plastocyanin-like 3">
    <location>
        <begin position="373"/>
        <end position="498"/>
    </location>
</feature>
<feature type="binding site" description="type 2 copper site" evidence="1">
    <location>
        <position position="87"/>
    </location>
    <ligand>
        <name>Cu cation</name>
        <dbReference type="ChEBI" id="CHEBI:23378"/>
        <label>1</label>
    </ligand>
</feature>
<feature type="binding site" description="type 3 copper site" evidence="1">
    <location>
        <position position="89"/>
    </location>
    <ligand>
        <name>Cu cation</name>
        <dbReference type="ChEBI" id="CHEBI:23378"/>
        <label>2</label>
    </ligand>
</feature>
<feature type="binding site" description="type 3 copper site" evidence="1">
    <location>
        <position position="132"/>
    </location>
    <ligand>
        <name>Cu cation</name>
        <dbReference type="ChEBI" id="CHEBI:23378"/>
        <label>2</label>
    </ligand>
</feature>
<feature type="binding site" description="type 3 copper site" evidence="1">
    <location>
        <position position="134"/>
    </location>
    <ligand>
        <name>Cu cation</name>
        <dbReference type="ChEBI" id="CHEBI:23378"/>
        <label>3</label>
    </ligand>
</feature>
<feature type="binding site" description="type 1 copper site" evidence="1">
    <location>
        <position position="425"/>
    </location>
    <ligand>
        <name>Cu cation</name>
        <dbReference type="ChEBI" id="CHEBI:23378"/>
        <label>4</label>
    </ligand>
</feature>
<feature type="binding site" description="type 2 copper site" evidence="1">
    <location>
        <position position="428"/>
    </location>
    <ligand>
        <name>Cu cation</name>
        <dbReference type="ChEBI" id="CHEBI:23378"/>
        <label>1</label>
    </ligand>
</feature>
<feature type="binding site" description="type 3 copper site" evidence="1">
    <location>
        <position position="430"/>
    </location>
    <ligand>
        <name>Cu cation</name>
        <dbReference type="ChEBI" id="CHEBI:23378"/>
        <label>3</label>
    </ligand>
</feature>
<feature type="binding site" description="type 3 copper site" evidence="1">
    <location>
        <position position="480"/>
    </location>
    <ligand>
        <name>Cu cation</name>
        <dbReference type="ChEBI" id="CHEBI:23378"/>
        <label>3</label>
    </ligand>
</feature>
<feature type="binding site" description="type 1 copper site" evidence="1">
    <location>
        <position position="481"/>
    </location>
    <ligand>
        <name>Cu cation</name>
        <dbReference type="ChEBI" id="CHEBI:23378"/>
        <label>4</label>
    </ligand>
</feature>
<feature type="binding site" description="type 3 copper site" evidence="1">
    <location>
        <position position="482"/>
    </location>
    <ligand>
        <name>Cu cation</name>
        <dbReference type="ChEBI" id="CHEBI:23378"/>
        <label>2</label>
    </ligand>
</feature>
<feature type="binding site" description="type 1 copper site" evidence="1">
    <location>
        <position position="486"/>
    </location>
    <ligand>
        <name>Cu cation</name>
        <dbReference type="ChEBI" id="CHEBI:23378"/>
        <label>4</label>
    </ligand>
</feature>
<feature type="glycosylation site" description="N-linked (GlcNAc...) asparagine" evidence="3">
    <location>
        <position position="74"/>
    </location>
</feature>
<feature type="glycosylation site" description="N-linked (GlcNAc...) asparagine" evidence="3">
    <location>
        <position position="77"/>
    </location>
</feature>
<feature type="glycosylation site" description="N-linked (GlcNAc...) asparagine" evidence="3">
    <location>
        <position position="156"/>
    </location>
</feature>
<feature type="glycosylation site" description="N-linked (GlcNAc...) asparagine" evidence="3">
    <location>
        <position position="209"/>
    </location>
</feature>
<feature type="glycosylation site" description="N-linked (GlcNAc...) asparagine" evidence="3">
    <location>
        <position position="233"/>
    </location>
</feature>
<feature type="glycosylation site" description="N-linked (GlcNAc...) asparagine" evidence="3">
    <location>
        <position position="242"/>
    </location>
</feature>
<feature type="glycosylation site" description="N-linked (GlcNAc...) asparagine" evidence="3">
    <location>
        <position position="276"/>
    </location>
</feature>
<feature type="glycosylation site" description="N-linked (GlcNAc...) asparagine" evidence="3">
    <location>
        <position position="317"/>
    </location>
</feature>
<feature type="glycosylation site" description="N-linked (GlcNAc...) asparagine" evidence="3">
    <location>
        <position position="358"/>
    </location>
</feature>
<feature type="glycosylation site" description="N-linked (GlcNAc...) asparagine" evidence="3">
    <location>
        <position position="366"/>
    </location>
</feature>
<feature type="glycosylation site" description="N-linked (GlcNAc...) asparagine" evidence="3">
    <location>
        <position position="393"/>
    </location>
</feature>
<feature type="glycosylation site" description="N-linked (GlcNAc...) asparagine" evidence="3">
    <location>
        <position position="402"/>
    </location>
</feature>
<feature type="disulfide bond" evidence="2">
    <location>
        <begin position="108"/>
        <end position="516"/>
    </location>
</feature>
<feature type="disulfide bond" evidence="1">
    <location>
        <begin position="140"/>
        <end position="230"/>
    </location>
</feature>
<organism>
    <name type="scientific">Trametes versicolor</name>
    <name type="common">White-rot fungus</name>
    <name type="synonym">Coriolus versicolor</name>
    <dbReference type="NCBI Taxonomy" id="5325"/>
    <lineage>
        <taxon>Eukaryota</taxon>
        <taxon>Fungi</taxon>
        <taxon>Dikarya</taxon>
        <taxon>Basidiomycota</taxon>
        <taxon>Agaricomycotina</taxon>
        <taxon>Agaricomycetes</taxon>
        <taxon>Polyporales</taxon>
        <taxon>Polyporaceae</taxon>
        <taxon>Trametes</taxon>
    </lineage>
</organism>
<protein>
    <recommendedName>
        <fullName>Laccase-5</fullName>
        <ecNumber evidence="2">1.10.3.2</ecNumber>
    </recommendedName>
    <alternativeName>
        <fullName>Benzenediol:oxygen oxidoreductase 5</fullName>
    </alternativeName>
    <alternativeName>
        <fullName>Diphenol oxidase 5</fullName>
    </alternativeName>
    <alternativeName>
        <fullName>Laccase IV</fullName>
    </alternativeName>
    <alternativeName>
        <fullName>Urishiol oxidase 5</fullName>
    </alternativeName>
</protein>
<evidence type="ECO:0000250" key="1">
    <source>
        <dbReference type="UniProtKB" id="D0VWU3"/>
    </source>
</evidence>
<evidence type="ECO:0000250" key="2">
    <source>
        <dbReference type="UniProtKB" id="Q70KY3"/>
    </source>
</evidence>
<evidence type="ECO:0000255" key="3"/>
<evidence type="ECO:0000305" key="4"/>
<accession>Q12717</accession>
<proteinExistence type="evidence at transcript level"/>